<accession>Q9USR1</accession>
<evidence type="ECO:0000255" key="1">
    <source>
        <dbReference type="PROSITE-ProRule" id="PRU00691"/>
    </source>
</evidence>
<evidence type="ECO:0000255" key="2">
    <source>
        <dbReference type="PROSITE-ProRule" id="PRU00864"/>
    </source>
</evidence>
<evidence type="ECO:0000269" key="3">
    <source>
    </source>
</evidence>
<evidence type="ECO:0000269" key="4">
    <source>
    </source>
</evidence>
<evidence type="ECO:0000269" key="5">
    <source>
    </source>
</evidence>
<keyword id="KW-0963">Cytoplasm</keyword>
<keyword id="KW-1015">Disulfide bond</keyword>
<keyword id="KW-0249">Electron transport</keyword>
<keyword id="KW-0539">Nucleus</keyword>
<keyword id="KW-0676">Redox-active center</keyword>
<keyword id="KW-1185">Reference proteome</keyword>
<keyword id="KW-0813">Transport</keyword>
<comment type="function">
    <text evidence="4 5">Has a role in cellular detoxification of alkyl hydroperoxide.</text>
</comment>
<comment type="subcellular location">
    <subcellularLocation>
        <location evidence="3 4">Cytoplasm</location>
    </subcellularLocation>
    <subcellularLocation>
        <location evidence="3 4">Nucleus</location>
    </subcellularLocation>
</comment>
<name>TXL1_SCHPO</name>
<dbReference type="EMBL" id="DQ386686">
    <property type="protein sequence ID" value="ABD47124.1"/>
    <property type="molecule type" value="Genomic_DNA"/>
</dbReference>
<dbReference type="EMBL" id="CU329671">
    <property type="protein sequence ID" value="CAB54816.1"/>
    <property type="molecule type" value="Genomic_DNA"/>
</dbReference>
<dbReference type="PIR" id="T40552">
    <property type="entry name" value="T40552"/>
</dbReference>
<dbReference type="RefSeq" id="NP_595306.1">
    <property type="nucleotide sequence ID" value="NM_001021213.2"/>
</dbReference>
<dbReference type="SMR" id="Q9USR1"/>
<dbReference type="BioGRID" id="277543">
    <property type="interactions" value="21"/>
</dbReference>
<dbReference type="FunCoup" id="Q9USR1">
    <property type="interactions" value="814"/>
</dbReference>
<dbReference type="STRING" id="284812.Q9USR1"/>
<dbReference type="iPTMnet" id="Q9USR1"/>
<dbReference type="PaxDb" id="4896-SPBC577.08c.1"/>
<dbReference type="EnsemblFungi" id="SPBC577.08c.1">
    <property type="protein sequence ID" value="SPBC577.08c.1:pep"/>
    <property type="gene ID" value="SPBC577.08c"/>
</dbReference>
<dbReference type="GeneID" id="2541028"/>
<dbReference type="KEGG" id="spo:2541028"/>
<dbReference type="PomBase" id="SPBC577.08c">
    <property type="gene designation" value="txl1"/>
</dbReference>
<dbReference type="VEuPathDB" id="FungiDB:SPBC577.08c"/>
<dbReference type="eggNOG" id="KOG0908">
    <property type="taxonomic scope" value="Eukaryota"/>
</dbReference>
<dbReference type="HOGENOM" id="CLU_072377_0_1_1"/>
<dbReference type="InParanoid" id="Q9USR1"/>
<dbReference type="OMA" id="TAKDWVE"/>
<dbReference type="PhylomeDB" id="Q9USR1"/>
<dbReference type="Reactome" id="R-SPO-9013420">
    <property type="pathway name" value="RHOU GTPase cycle"/>
</dbReference>
<dbReference type="Reactome" id="R-SPO-9013424">
    <property type="pathway name" value="RHOV GTPase cycle"/>
</dbReference>
<dbReference type="Reactome" id="R-SPO-9696270">
    <property type="pathway name" value="RND2 GTPase cycle"/>
</dbReference>
<dbReference type="Reactome" id="R-SPO-9696273">
    <property type="pathway name" value="RND1 GTPase cycle"/>
</dbReference>
<dbReference type="PRO" id="PR:Q9USR1"/>
<dbReference type="Proteomes" id="UP000002485">
    <property type="component" value="Chromosome II"/>
</dbReference>
<dbReference type="GO" id="GO:0005737">
    <property type="term" value="C:cytoplasm"/>
    <property type="evidence" value="ECO:0000314"/>
    <property type="project" value="PomBase"/>
</dbReference>
<dbReference type="GO" id="GO:0005829">
    <property type="term" value="C:cytosol"/>
    <property type="evidence" value="ECO:0007005"/>
    <property type="project" value="PomBase"/>
</dbReference>
<dbReference type="GO" id="GO:0034399">
    <property type="term" value="C:nuclear periphery"/>
    <property type="evidence" value="ECO:0000314"/>
    <property type="project" value="PomBase"/>
</dbReference>
<dbReference type="GO" id="GO:0005634">
    <property type="term" value="C:nucleus"/>
    <property type="evidence" value="ECO:0000314"/>
    <property type="project" value="PomBase"/>
</dbReference>
<dbReference type="GO" id="GO:0015035">
    <property type="term" value="F:protein-disulfide reductase activity"/>
    <property type="evidence" value="ECO:0000314"/>
    <property type="project" value="PomBase"/>
</dbReference>
<dbReference type="GO" id="GO:0000122">
    <property type="term" value="P:negative regulation of transcription by RNA polymerase II"/>
    <property type="evidence" value="ECO:0000315"/>
    <property type="project" value="PomBase"/>
</dbReference>
<dbReference type="GO" id="GO:0043161">
    <property type="term" value="P:proteasome-mediated ubiquitin-dependent protein catabolic process"/>
    <property type="evidence" value="ECO:0000315"/>
    <property type="project" value="PomBase"/>
</dbReference>
<dbReference type="CDD" id="cd02947">
    <property type="entry name" value="TRX_family"/>
    <property type="match status" value="1"/>
</dbReference>
<dbReference type="FunFam" id="3.40.30.10:FF:000245">
    <property type="entry name" value="Thioredoxin"/>
    <property type="match status" value="1"/>
</dbReference>
<dbReference type="Gene3D" id="3.40.30.10">
    <property type="entry name" value="Glutaredoxin"/>
    <property type="match status" value="1"/>
</dbReference>
<dbReference type="Gene3D" id="2.60.120.470">
    <property type="entry name" value="PITH domain"/>
    <property type="match status" value="1"/>
</dbReference>
<dbReference type="InterPro" id="IPR008979">
    <property type="entry name" value="Galactose-bd-like_sf"/>
</dbReference>
<dbReference type="InterPro" id="IPR010400">
    <property type="entry name" value="PITH_dom"/>
</dbReference>
<dbReference type="InterPro" id="IPR037047">
    <property type="entry name" value="PITH_dom_sf"/>
</dbReference>
<dbReference type="InterPro" id="IPR036249">
    <property type="entry name" value="Thioredoxin-like_sf"/>
</dbReference>
<dbReference type="InterPro" id="IPR013766">
    <property type="entry name" value="Thioredoxin_domain"/>
</dbReference>
<dbReference type="PANTHER" id="PTHR46115">
    <property type="entry name" value="THIOREDOXIN-LIKE PROTEIN 1"/>
    <property type="match status" value="1"/>
</dbReference>
<dbReference type="Pfam" id="PF06201">
    <property type="entry name" value="PITH"/>
    <property type="match status" value="1"/>
</dbReference>
<dbReference type="Pfam" id="PF00085">
    <property type="entry name" value="Thioredoxin"/>
    <property type="match status" value="1"/>
</dbReference>
<dbReference type="PRINTS" id="PR00421">
    <property type="entry name" value="THIOREDOXIN"/>
</dbReference>
<dbReference type="SUPFAM" id="SSF49785">
    <property type="entry name" value="Galactose-binding domain-like"/>
    <property type="match status" value="1"/>
</dbReference>
<dbReference type="SUPFAM" id="SSF52833">
    <property type="entry name" value="Thioredoxin-like"/>
    <property type="match status" value="1"/>
</dbReference>
<dbReference type="PROSITE" id="PS51532">
    <property type="entry name" value="PITH"/>
    <property type="match status" value="1"/>
</dbReference>
<dbReference type="PROSITE" id="PS51352">
    <property type="entry name" value="THIOREDOXIN_2"/>
    <property type="match status" value="1"/>
</dbReference>
<sequence length="290" mass="31889">MSVIEIRSYQHWISTIPKSGYLAVDCYADWCGPCKAISPLFSQLASKYASPKFVFAKVNVDEQRQIASGLGVKAMPTFVFFENGKQIDMLTGANPQALKEKVALISSKATGTGALASSSSAPVKGFASLQGCIENPQLECLNQQDDHDLKSAFNSNPSSFLESDVDEQLMIYIPFLEVVKVHSIAITPVKGETSSAPKTIKLYINQPNNLSFEDAESFTPTQVIEDIVYEQDDQPTIIPLRFVKFQRVNSLVIFIYSNVGEEETTKISRLELFGEPVGDSSKGKLQKVEA</sequence>
<feature type="chain" id="PRO_0000372631" description="Thioredoxin-like protein 1">
    <location>
        <begin position="1"/>
        <end position="290"/>
    </location>
</feature>
<feature type="domain" description="Thioredoxin" evidence="1">
    <location>
        <begin position="24"/>
        <end position="104"/>
    </location>
</feature>
<feature type="domain" description="PITH" evidence="2">
    <location>
        <begin position="118"/>
        <end position="290"/>
    </location>
</feature>
<feature type="disulfide bond" description="Redox-active" evidence="1">
    <location>
        <begin position="31"/>
        <end position="34"/>
    </location>
</feature>
<protein>
    <recommendedName>
        <fullName>Thioredoxin-like protein 1</fullName>
    </recommendedName>
    <alternativeName>
        <fullName>Thioredoxin homolog 3</fullName>
    </alternativeName>
</protein>
<reference key="1">
    <citation type="journal article" date="2007" name="Can. J. Microbiol.">
        <title>Cellular functions and transcriptional regulation of a third thioredoxin from Schizosaccharomyces pombe.</title>
        <authorList>
            <person name="Kim S.-J."/>
            <person name="Jung E.-M."/>
            <person name="Jung H.-J."/>
            <person name="Song Y.S."/>
            <person name="Park E.-H."/>
            <person name="Lim C.-J."/>
        </authorList>
    </citation>
    <scope>NUCLEOTIDE SEQUENCE [GENOMIC DNA]</scope>
    <scope>FUNCTION</scope>
</reference>
<reference key="2">
    <citation type="journal article" date="2002" name="Nature">
        <title>The genome sequence of Schizosaccharomyces pombe.</title>
        <authorList>
            <person name="Wood V."/>
            <person name="Gwilliam R."/>
            <person name="Rajandream M.A."/>
            <person name="Lyne M.H."/>
            <person name="Lyne R."/>
            <person name="Stewart A."/>
            <person name="Sgouros J.G."/>
            <person name="Peat N."/>
            <person name="Hayles J."/>
            <person name="Baker S.G."/>
            <person name="Basham D."/>
            <person name="Bowman S."/>
            <person name="Brooks K."/>
            <person name="Brown D."/>
            <person name="Brown S."/>
            <person name="Chillingworth T."/>
            <person name="Churcher C.M."/>
            <person name="Collins M."/>
            <person name="Connor R."/>
            <person name="Cronin A."/>
            <person name="Davis P."/>
            <person name="Feltwell T."/>
            <person name="Fraser A."/>
            <person name="Gentles S."/>
            <person name="Goble A."/>
            <person name="Hamlin N."/>
            <person name="Harris D.E."/>
            <person name="Hidalgo J."/>
            <person name="Hodgson G."/>
            <person name="Holroyd S."/>
            <person name="Hornsby T."/>
            <person name="Howarth S."/>
            <person name="Huckle E.J."/>
            <person name="Hunt S."/>
            <person name="Jagels K."/>
            <person name="James K.D."/>
            <person name="Jones L."/>
            <person name="Jones M."/>
            <person name="Leather S."/>
            <person name="McDonald S."/>
            <person name="McLean J."/>
            <person name="Mooney P."/>
            <person name="Moule S."/>
            <person name="Mungall K.L."/>
            <person name="Murphy L.D."/>
            <person name="Niblett D."/>
            <person name="Odell C."/>
            <person name="Oliver K."/>
            <person name="O'Neil S."/>
            <person name="Pearson D."/>
            <person name="Quail M.A."/>
            <person name="Rabbinowitsch E."/>
            <person name="Rutherford K.M."/>
            <person name="Rutter S."/>
            <person name="Saunders D."/>
            <person name="Seeger K."/>
            <person name="Sharp S."/>
            <person name="Skelton J."/>
            <person name="Simmonds M.N."/>
            <person name="Squares R."/>
            <person name="Squares S."/>
            <person name="Stevens K."/>
            <person name="Taylor K."/>
            <person name="Taylor R.G."/>
            <person name="Tivey A."/>
            <person name="Walsh S.V."/>
            <person name="Warren T."/>
            <person name="Whitehead S."/>
            <person name="Woodward J.R."/>
            <person name="Volckaert G."/>
            <person name="Aert R."/>
            <person name="Robben J."/>
            <person name="Grymonprez B."/>
            <person name="Weltjens I."/>
            <person name="Vanstreels E."/>
            <person name="Rieger M."/>
            <person name="Schaefer M."/>
            <person name="Mueller-Auer S."/>
            <person name="Gabel C."/>
            <person name="Fuchs M."/>
            <person name="Duesterhoeft A."/>
            <person name="Fritzc C."/>
            <person name="Holzer E."/>
            <person name="Moestl D."/>
            <person name="Hilbert H."/>
            <person name="Borzym K."/>
            <person name="Langer I."/>
            <person name="Beck A."/>
            <person name="Lehrach H."/>
            <person name="Reinhardt R."/>
            <person name="Pohl T.M."/>
            <person name="Eger P."/>
            <person name="Zimmermann W."/>
            <person name="Wedler H."/>
            <person name="Wambutt R."/>
            <person name="Purnelle B."/>
            <person name="Goffeau A."/>
            <person name="Cadieu E."/>
            <person name="Dreano S."/>
            <person name="Gloux S."/>
            <person name="Lelaure V."/>
            <person name="Mottier S."/>
            <person name="Galibert F."/>
            <person name="Aves S.J."/>
            <person name="Xiang Z."/>
            <person name="Hunt C."/>
            <person name="Moore K."/>
            <person name="Hurst S.M."/>
            <person name="Lucas M."/>
            <person name="Rochet M."/>
            <person name="Gaillardin C."/>
            <person name="Tallada V.A."/>
            <person name="Garzon A."/>
            <person name="Thode G."/>
            <person name="Daga R.R."/>
            <person name="Cruzado L."/>
            <person name="Jimenez J."/>
            <person name="Sanchez M."/>
            <person name="del Rey F."/>
            <person name="Benito J."/>
            <person name="Dominguez A."/>
            <person name="Revuelta J.L."/>
            <person name="Moreno S."/>
            <person name="Armstrong J."/>
            <person name="Forsburg S.L."/>
            <person name="Cerutti L."/>
            <person name="Lowe T."/>
            <person name="McCombie W.R."/>
            <person name="Paulsen I."/>
            <person name="Potashkin J."/>
            <person name="Shpakovski G.V."/>
            <person name="Ussery D."/>
            <person name="Barrell B.G."/>
            <person name="Nurse P."/>
        </authorList>
    </citation>
    <scope>NUCLEOTIDE SEQUENCE [LARGE SCALE GENOMIC DNA]</scope>
    <source>
        <strain>972 / ATCC 24843</strain>
    </source>
</reference>
<reference key="3">
    <citation type="journal article" date="2006" name="Nat. Biotechnol.">
        <title>ORFeome cloning and global analysis of protein localization in the fission yeast Schizosaccharomyces pombe.</title>
        <authorList>
            <person name="Matsuyama A."/>
            <person name="Arai R."/>
            <person name="Yashiroda Y."/>
            <person name="Shirai A."/>
            <person name="Kamata A."/>
            <person name="Sekido S."/>
            <person name="Kobayashi Y."/>
            <person name="Hashimoto A."/>
            <person name="Hamamoto M."/>
            <person name="Hiraoka Y."/>
            <person name="Horinouchi S."/>
            <person name="Yoshida M."/>
        </authorList>
    </citation>
    <scope>SUBCELLULAR LOCATION [LARGE SCALE ANALYSIS]</scope>
</reference>
<reference key="4">
    <citation type="journal article" date="2007" name="Yeast">
        <title>The txl1+ gene from Schizosaccharomyces pombe encodes a new thioredoxin-like 1 protein that participates in the antioxidant defence against tert-butyl hydroperoxide.</title>
        <authorList>
            <person name="Jimenez A."/>
            <person name="Mateos L."/>
            <person name="Pedrajas J.R."/>
            <person name="Miranda-Vizuete A."/>
            <person name="Revuelta J.L."/>
        </authorList>
    </citation>
    <scope>FUNCTION</scope>
    <scope>SUBCELLULAR LOCATION</scope>
</reference>
<gene>
    <name type="primary">txl1</name>
    <name type="synonym">trx3</name>
    <name type="ORF">SPBC577.08c</name>
</gene>
<proteinExistence type="predicted"/>
<organism>
    <name type="scientific">Schizosaccharomyces pombe (strain 972 / ATCC 24843)</name>
    <name type="common">Fission yeast</name>
    <dbReference type="NCBI Taxonomy" id="284812"/>
    <lineage>
        <taxon>Eukaryota</taxon>
        <taxon>Fungi</taxon>
        <taxon>Dikarya</taxon>
        <taxon>Ascomycota</taxon>
        <taxon>Taphrinomycotina</taxon>
        <taxon>Schizosaccharomycetes</taxon>
        <taxon>Schizosaccharomycetales</taxon>
        <taxon>Schizosaccharomycetaceae</taxon>
        <taxon>Schizosaccharomyces</taxon>
    </lineage>
</organism>